<proteinExistence type="inferred from homology"/>
<keyword id="KW-0030">Aminoacyl-tRNA synthetase</keyword>
<keyword id="KW-0067">ATP-binding</keyword>
<keyword id="KW-0963">Cytoplasm</keyword>
<keyword id="KW-0436">Ligase</keyword>
<keyword id="KW-0479">Metal-binding</keyword>
<keyword id="KW-0547">Nucleotide-binding</keyword>
<keyword id="KW-0648">Protein biosynthesis</keyword>
<keyword id="KW-0862">Zinc</keyword>
<comment type="catalytic activity">
    <reaction evidence="1">
        <text>tRNA(Cys) + L-cysteine + ATP = L-cysteinyl-tRNA(Cys) + AMP + diphosphate</text>
        <dbReference type="Rhea" id="RHEA:17773"/>
        <dbReference type="Rhea" id="RHEA-COMP:9661"/>
        <dbReference type="Rhea" id="RHEA-COMP:9679"/>
        <dbReference type="ChEBI" id="CHEBI:30616"/>
        <dbReference type="ChEBI" id="CHEBI:33019"/>
        <dbReference type="ChEBI" id="CHEBI:35235"/>
        <dbReference type="ChEBI" id="CHEBI:78442"/>
        <dbReference type="ChEBI" id="CHEBI:78517"/>
        <dbReference type="ChEBI" id="CHEBI:456215"/>
        <dbReference type="EC" id="6.1.1.16"/>
    </reaction>
</comment>
<comment type="cofactor">
    <cofactor evidence="1">
        <name>Zn(2+)</name>
        <dbReference type="ChEBI" id="CHEBI:29105"/>
    </cofactor>
    <text evidence="1">Binds 1 zinc ion per subunit.</text>
</comment>
<comment type="subunit">
    <text evidence="1">Monomer.</text>
</comment>
<comment type="subcellular location">
    <subcellularLocation>
        <location evidence="1">Cytoplasm</location>
    </subcellularLocation>
</comment>
<comment type="similarity">
    <text evidence="1">Belongs to the class-I aminoacyl-tRNA synthetase family.</text>
</comment>
<reference key="1">
    <citation type="journal article" date="2006" name="Genome Res.">
        <title>Skewed genomic variability in strains of the toxigenic bacterial pathogen, Clostridium perfringens.</title>
        <authorList>
            <person name="Myers G.S.A."/>
            <person name="Rasko D.A."/>
            <person name="Cheung J.K."/>
            <person name="Ravel J."/>
            <person name="Seshadri R."/>
            <person name="DeBoy R.T."/>
            <person name="Ren Q."/>
            <person name="Varga J."/>
            <person name="Awad M.M."/>
            <person name="Brinkac L.M."/>
            <person name="Daugherty S.C."/>
            <person name="Haft D.H."/>
            <person name="Dodson R.J."/>
            <person name="Madupu R."/>
            <person name="Nelson W.C."/>
            <person name="Rosovitz M.J."/>
            <person name="Sullivan S.A."/>
            <person name="Khouri H."/>
            <person name="Dimitrov G.I."/>
            <person name="Watkins K.L."/>
            <person name="Mulligan S."/>
            <person name="Benton J."/>
            <person name="Radune D."/>
            <person name="Fisher D.J."/>
            <person name="Atkins H.S."/>
            <person name="Hiscox T."/>
            <person name="Jost B.H."/>
            <person name="Billington S.J."/>
            <person name="Songer J.G."/>
            <person name="McClane B.A."/>
            <person name="Titball R.W."/>
            <person name="Rood J.I."/>
            <person name="Melville S.B."/>
            <person name="Paulsen I.T."/>
        </authorList>
    </citation>
    <scope>NUCLEOTIDE SEQUENCE [LARGE SCALE GENOMIC DNA]</scope>
    <source>
        <strain>ATCC 13124 / DSM 756 / JCM 1290 / NCIMB 6125 / NCTC 8237 / S 107 / Type A</strain>
    </source>
</reference>
<name>SYC_CLOP1</name>
<sequence>MIKVYNTLNKKKEEFIPLTPGEVKMYVCGPTVYNFFHIGNGRTFIVFDTIRRYFEYRGFKVDFVQNFTDIDDKMIKKANEEGTTVKKIGDTYIKEYYQDADALNIERATVNPRATEFIGEIIKFVKGLVDKGYAYEVDGDVYFSTKKFEGYGKLSGQNIEDLQSGARISVDERKKDPMDFAIWKAQKPGEPAWNSPWGMGRPGWHIECSCMAKKLLGETIDIHAGGSDLKFPHHENEIAQSEALTGEPFARYWLHSAFVNVNNEKMSKSLNNFFTAREILERYDADVIRFLMLSAHYRQQLNFSEDLLESAKASVERIYNAIGNLENLIDEVSREEMNEEEKAYLESLNKYKEKYIEKMDDDFNTADAITAIFDLIKDTNTNITIDSSKELAQKALELIRELGAPLGMFQKSTKGNLEEEIEALIAKRQQARKDRDFTLADKIRDELKDRGIVLEDTPQGVRWKMI</sequence>
<feature type="chain" id="PRO_0000332806" description="Cysteine--tRNA ligase">
    <location>
        <begin position="1"/>
        <end position="466"/>
    </location>
</feature>
<feature type="short sequence motif" description="'HIGH' region">
    <location>
        <begin position="30"/>
        <end position="40"/>
    </location>
</feature>
<feature type="short sequence motif" description="'KMSKS' region">
    <location>
        <begin position="265"/>
        <end position="269"/>
    </location>
</feature>
<feature type="binding site" evidence="1">
    <location>
        <position position="28"/>
    </location>
    <ligand>
        <name>Zn(2+)</name>
        <dbReference type="ChEBI" id="CHEBI:29105"/>
    </ligand>
</feature>
<feature type="binding site" evidence="1">
    <location>
        <position position="208"/>
    </location>
    <ligand>
        <name>Zn(2+)</name>
        <dbReference type="ChEBI" id="CHEBI:29105"/>
    </ligand>
</feature>
<feature type="binding site" evidence="1">
    <location>
        <position position="233"/>
    </location>
    <ligand>
        <name>Zn(2+)</name>
        <dbReference type="ChEBI" id="CHEBI:29105"/>
    </ligand>
</feature>
<feature type="binding site" evidence="1">
    <location>
        <position position="237"/>
    </location>
    <ligand>
        <name>Zn(2+)</name>
        <dbReference type="ChEBI" id="CHEBI:29105"/>
    </ligand>
</feature>
<feature type="binding site" evidence="1">
    <location>
        <position position="268"/>
    </location>
    <ligand>
        <name>ATP</name>
        <dbReference type="ChEBI" id="CHEBI:30616"/>
    </ligand>
</feature>
<evidence type="ECO:0000255" key="1">
    <source>
        <dbReference type="HAMAP-Rule" id="MF_00041"/>
    </source>
</evidence>
<dbReference type="EC" id="6.1.1.16" evidence="1"/>
<dbReference type="EMBL" id="CP000246">
    <property type="protein sequence ID" value="ABG83340.1"/>
    <property type="molecule type" value="Genomic_DNA"/>
</dbReference>
<dbReference type="SMR" id="Q0TMM4"/>
<dbReference type="STRING" id="195103.CPF_2737"/>
<dbReference type="PaxDb" id="195103-CPF_2737"/>
<dbReference type="KEGG" id="cpf:CPF_2737"/>
<dbReference type="eggNOG" id="COG0215">
    <property type="taxonomic scope" value="Bacteria"/>
</dbReference>
<dbReference type="HOGENOM" id="CLU_013528_0_1_9"/>
<dbReference type="Proteomes" id="UP000001823">
    <property type="component" value="Chromosome"/>
</dbReference>
<dbReference type="GO" id="GO:0005829">
    <property type="term" value="C:cytosol"/>
    <property type="evidence" value="ECO:0007669"/>
    <property type="project" value="TreeGrafter"/>
</dbReference>
<dbReference type="GO" id="GO:0005524">
    <property type="term" value="F:ATP binding"/>
    <property type="evidence" value="ECO:0007669"/>
    <property type="project" value="UniProtKB-UniRule"/>
</dbReference>
<dbReference type="GO" id="GO:0004817">
    <property type="term" value="F:cysteine-tRNA ligase activity"/>
    <property type="evidence" value="ECO:0007669"/>
    <property type="project" value="UniProtKB-UniRule"/>
</dbReference>
<dbReference type="GO" id="GO:0008270">
    <property type="term" value="F:zinc ion binding"/>
    <property type="evidence" value="ECO:0007669"/>
    <property type="project" value="UniProtKB-UniRule"/>
</dbReference>
<dbReference type="GO" id="GO:0006423">
    <property type="term" value="P:cysteinyl-tRNA aminoacylation"/>
    <property type="evidence" value="ECO:0007669"/>
    <property type="project" value="UniProtKB-UniRule"/>
</dbReference>
<dbReference type="CDD" id="cd00672">
    <property type="entry name" value="CysRS_core"/>
    <property type="match status" value="1"/>
</dbReference>
<dbReference type="FunFam" id="3.40.50.620:FF:000009">
    <property type="entry name" value="Cysteine--tRNA ligase"/>
    <property type="match status" value="1"/>
</dbReference>
<dbReference type="Gene3D" id="1.20.120.1910">
    <property type="entry name" value="Cysteine-tRNA ligase, C-terminal anti-codon recognition domain"/>
    <property type="match status" value="1"/>
</dbReference>
<dbReference type="Gene3D" id="3.40.50.620">
    <property type="entry name" value="HUPs"/>
    <property type="match status" value="1"/>
</dbReference>
<dbReference type="HAMAP" id="MF_00041">
    <property type="entry name" value="Cys_tRNA_synth"/>
    <property type="match status" value="1"/>
</dbReference>
<dbReference type="InterPro" id="IPR015803">
    <property type="entry name" value="Cys-tRNA-ligase"/>
</dbReference>
<dbReference type="InterPro" id="IPR015273">
    <property type="entry name" value="Cys-tRNA-synt_Ia_DALR"/>
</dbReference>
<dbReference type="InterPro" id="IPR024909">
    <property type="entry name" value="Cys-tRNA/MSH_ligase"/>
</dbReference>
<dbReference type="InterPro" id="IPR056411">
    <property type="entry name" value="CysS_C"/>
</dbReference>
<dbReference type="InterPro" id="IPR014729">
    <property type="entry name" value="Rossmann-like_a/b/a_fold"/>
</dbReference>
<dbReference type="InterPro" id="IPR032678">
    <property type="entry name" value="tRNA-synt_1_cat_dom"/>
</dbReference>
<dbReference type="InterPro" id="IPR009080">
    <property type="entry name" value="tRNAsynth_Ia_anticodon-bd"/>
</dbReference>
<dbReference type="NCBIfam" id="TIGR00435">
    <property type="entry name" value="cysS"/>
    <property type="match status" value="1"/>
</dbReference>
<dbReference type="PANTHER" id="PTHR10890:SF3">
    <property type="entry name" value="CYSTEINE--TRNA LIGASE, CYTOPLASMIC"/>
    <property type="match status" value="1"/>
</dbReference>
<dbReference type="PANTHER" id="PTHR10890">
    <property type="entry name" value="CYSTEINYL-TRNA SYNTHETASE"/>
    <property type="match status" value="1"/>
</dbReference>
<dbReference type="Pfam" id="PF23493">
    <property type="entry name" value="CysS_C"/>
    <property type="match status" value="1"/>
</dbReference>
<dbReference type="Pfam" id="PF09190">
    <property type="entry name" value="DALR_2"/>
    <property type="match status" value="1"/>
</dbReference>
<dbReference type="Pfam" id="PF01406">
    <property type="entry name" value="tRNA-synt_1e"/>
    <property type="match status" value="1"/>
</dbReference>
<dbReference type="PRINTS" id="PR00983">
    <property type="entry name" value="TRNASYNTHCYS"/>
</dbReference>
<dbReference type="SMART" id="SM00840">
    <property type="entry name" value="DALR_2"/>
    <property type="match status" value="1"/>
</dbReference>
<dbReference type="SUPFAM" id="SSF47323">
    <property type="entry name" value="Anticodon-binding domain of a subclass of class I aminoacyl-tRNA synthetases"/>
    <property type="match status" value="1"/>
</dbReference>
<dbReference type="SUPFAM" id="SSF52374">
    <property type="entry name" value="Nucleotidylyl transferase"/>
    <property type="match status" value="1"/>
</dbReference>
<accession>Q0TMM4</accession>
<organism>
    <name type="scientific">Clostridium perfringens (strain ATCC 13124 / DSM 756 / JCM 1290 / NCIMB 6125 / NCTC 8237 / Type A)</name>
    <dbReference type="NCBI Taxonomy" id="195103"/>
    <lineage>
        <taxon>Bacteria</taxon>
        <taxon>Bacillati</taxon>
        <taxon>Bacillota</taxon>
        <taxon>Clostridia</taxon>
        <taxon>Eubacteriales</taxon>
        <taxon>Clostridiaceae</taxon>
        <taxon>Clostridium</taxon>
    </lineage>
</organism>
<protein>
    <recommendedName>
        <fullName evidence="1">Cysteine--tRNA ligase</fullName>
        <ecNumber evidence="1">6.1.1.16</ecNumber>
    </recommendedName>
    <alternativeName>
        <fullName evidence="1">Cysteinyl-tRNA synthetase</fullName>
        <shortName evidence="1">CysRS</shortName>
    </alternativeName>
</protein>
<gene>
    <name evidence="1" type="primary">cysS</name>
    <name type="ordered locus">CPF_2737</name>
</gene>